<gene>
    <name evidence="7" type="primary">DRM3</name>
    <name evidence="9" type="ordered locus">At3g17310</name>
</gene>
<proteinExistence type="evidence at protein level"/>
<comment type="function">
    <text evidence="4 5 6">Catalytically inactive DNA methyltransferase that acts as regulatory factor for DRM2-mediated DNA methylation. Required for maintenance of non-CpG DNA methylation. Required for normal establishment and maintenance of RNA-directed DNA methylation (RdDM) and accumulation of specific repeat-associated small interfering RNAs (siRNAs) (PubMed:21060858, PubMed:25316414, PubMed:25561521). Required for nucleolus organizer region (NOR) nuclear organization during interphase (PubMed:25316414). Acts downstream of the production of siRNAs. May promote RNA polymerase V (Pol V) transcriptional elongation or assist in the stabilization of Pol V transcripts (PubMed:25561521).</text>
</comment>
<comment type="subunit">
    <text evidence="6">Interacts with Pol V.</text>
</comment>
<comment type="subcellular location">
    <subcellularLocation>
        <location evidence="5">Nucleus</location>
    </subcellularLocation>
    <text evidence="5">Colocalizes with AGO4 in perinucleolar region.</text>
</comment>
<comment type="similarity">
    <text evidence="2">Belongs to the class I-like SAM-binding methyltransferase superfamily. DRM-methyltransferase family.</text>
</comment>
<comment type="caution">
    <text>Lacks the conserved tripeptide Ser-Pro-Cys in position 672 necessary for the methyltransferase activity in DRM protein (AC Q9M548).</text>
</comment>
<comment type="sequence caution" evidence="8">
    <conflict type="erroneous gene model prediction">
        <sequence resource="EMBL-CDS" id="BAB02735"/>
    </conflict>
</comment>
<feature type="chain" id="PRO_0000438155" description="Probable inactive DNA (cytosine-5)-methyltransferase DRM3">
    <location>
        <begin position="1"/>
        <end position="710"/>
    </location>
</feature>
<feature type="domain" description="UBA 1" evidence="1">
    <location>
        <begin position="52"/>
        <end position="92"/>
    </location>
</feature>
<feature type="domain" description="UBA 2" evidence="1">
    <location>
        <begin position="198"/>
        <end position="242"/>
    </location>
</feature>
<feature type="domain" description="SAM-dependent MTase DRM-type" evidence="2">
    <location>
        <begin position="379"/>
        <end position="710"/>
    </location>
</feature>
<feature type="region of interest" description="Disordered" evidence="3">
    <location>
        <begin position="1"/>
        <end position="21"/>
    </location>
</feature>
<feature type="region of interest" description="Disordered" evidence="3">
    <location>
        <begin position="167"/>
        <end position="192"/>
    </location>
</feature>
<feature type="region of interest" description="Disordered" evidence="3">
    <location>
        <begin position="282"/>
        <end position="360"/>
    </location>
</feature>
<feature type="compositionally biased region" description="Acidic residues" evidence="3">
    <location>
        <begin position="167"/>
        <end position="184"/>
    </location>
</feature>
<feature type="compositionally biased region" description="Basic and acidic residues" evidence="3">
    <location>
        <begin position="339"/>
        <end position="350"/>
    </location>
</feature>
<feature type="sequence conflict" description="In Ref. 4; AAK92819." evidence="8" ref="4">
    <original>N</original>
    <variation>S</variation>
    <location>
        <position position="77"/>
    </location>
</feature>
<sequence length="710" mass="79731">MADMRRRNGSGGSSNHERNEQILFPKPETLDFDLPCDTSFPQQIGDNAASSSGSNVKSLLIEMGFCPTLVQKAIDENGQDDFELLLEILTKSTETEPPGPSFHGLMEPKPEPDIEYETDRIRIALLTMKFPENLVDFALDRLGKDTPIDEMVDFIVAAQLAEKYAEESEDSLDGAEINEEDEDVTPVTARGPEVPNEQLFETMDKTLRLLEMGFSNDEISMAIEKIGTKGQISVLAESIVTGEFPAECHDDLEDIEKKVSAAAPAVNRTCLSKSWRFVGVGAQKEDGGGGSSSGTANIKPDPGIESFPFPATDNVGETSRGKRPKDEDENAYPEEYTGYDDRGKRLRPEDMGDSSSFMETPWMQDEWKDNTYEFPSVMQPRLSQSLGPKVARRPYFFYGQLGELSPSWWSKISGFLFGIHPEHVDTRLCSALRRTEGYLHNLPTVNRFNTLPNPRLTIQDAMPHMRSWWPQWDIRKHFNSGTCSNMKDATLLCERIGRRIAECKGKPTQQDQTLILRHCHTSNLIWIAPNILSPLEPEHLECIMGYPMNHTNIGGGRLAERLKLFDYCFQTDTLGYHLSVLKSMFPQGLTVLSLFSGIGGAEIALDRLGIHLKGVVSVESCGLSRNILKRWWQTSGQTGELVQIEEIKSLTAKRLETLMQRFGGFDFVICQNPSTPLDLSKEISNSEACEFDYTLFNEFARVTKRVRDMM</sequence>
<evidence type="ECO:0000255" key="1">
    <source>
        <dbReference type="PROSITE-ProRule" id="PRU00212"/>
    </source>
</evidence>
<evidence type="ECO:0000255" key="2">
    <source>
        <dbReference type="PROSITE-ProRule" id="PRU01017"/>
    </source>
</evidence>
<evidence type="ECO:0000256" key="3">
    <source>
        <dbReference type="SAM" id="MobiDB-lite"/>
    </source>
</evidence>
<evidence type="ECO:0000269" key="4">
    <source>
    </source>
</evidence>
<evidence type="ECO:0000269" key="5">
    <source>
    </source>
</evidence>
<evidence type="ECO:0000269" key="6">
    <source>
    </source>
</evidence>
<evidence type="ECO:0000303" key="7">
    <source>
    </source>
</evidence>
<evidence type="ECO:0000305" key="8"/>
<evidence type="ECO:0000312" key="9">
    <source>
        <dbReference type="Araport" id="AT3G17310"/>
    </source>
</evidence>
<reference key="1">
    <citation type="journal article" date="2000" name="DNA Res.">
        <title>Structural analysis of Arabidopsis thaliana chromosome 3. I. Sequence features of the regions of 4,504,864 bp covered by sixty P1 and TAC clones.</title>
        <authorList>
            <person name="Sato S."/>
            <person name="Nakamura Y."/>
            <person name="Kaneko T."/>
            <person name="Katoh T."/>
            <person name="Asamizu E."/>
            <person name="Tabata S."/>
        </authorList>
    </citation>
    <scope>NUCLEOTIDE SEQUENCE [LARGE SCALE GENOMIC DNA]</scope>
    <source>
        <strain>cv. Columbia</strain>
    </source>
</reference>
<reference key="2">
    <citation type="journal article" date="2017" name="Plant J.">
        <title>Araport11: a complete reannotation of the Arabidopsis thaliana reference genome.</title>
        <authorList>
            <person name="Cheng C.Y."/>
            <person name="Krishnakumar V."/>
            <person name="Chan A.P."/>
            <person name="Thibaud-Nissen F."/>
            <person name="Schobel S."/>
            <person name="Town C.D."/>
        </authorList>
    </citation>
    <scope>GENOME REANNOTATION</scope>
    <source>
        <strain>cv. Columbia</strain>
    </source>
</reference>
<reference key="3">
    <citation type="journal article" date="2003" name="Science">
        <title>Empirical analysis of transcriptional activity in the Arabidopsis genome.</title>
        <authorList>
            <person name="Yamada K."/>
            <person name="Lim J."/>
            <person name="Dale J.M."/>
            <person name="Chen H."/>
            <person name="Shinn P."/>
            <person name="Palm C.J."/>
            <person name="Southwick A.M."/>
            <person name="Wu H.C."/>
            <person name="Kim C.J."/>
            <person name="Nguyen M."/>
            <person name="Pham P.K."/>
            <person name="Cheuk R.F."/>
            <person name="Karlin-Newmann G."/>
            <person name="Liu S.X."/>
            <person name="Lam B."/>
            <person name="Sakano H."/>
            <person name="Wu T."/>
            <person name="Yu G."/>
            <person name="Miranda M."/>
            <person name="Quach H.L."/>
            <person name="Tripp M."/>
            <person name="Chang C.H."/>
            <person name="Lee J.M."/>
            <person name="Toriumi M.J."/>
            <person name="Chan M.M."/>
            <person name="Tang C.C."/>
            <person name="Onodera C.S."/>
            <person name="Deng J.M."/>
            <person name="Akiyama K."/>
            <person name="Ansari Y."/>
            <person name="Arakawa T."/>
            <person name="Banh J."/>
            <person name="Banno F."/>
            <person name="Bowser L."/>
            <person name="Brooks S.Y."/>
            <person name="Carninci P."/>
            <person name="Chao Q."/>
            <person name="Choy N."/>
            <person name="Enju A."/>
            <person name="Goldsmith A.D."/>
            <person name="Gurjal M."/>
            <person name="Hansen N.F."/>
            <person name="Hayashizaki Y."/>
            <person name="Johnson-Hopson C."/>
            <person name="Hsuan V.W."/>
            <person name="Iida K."/>
            <person name="Karnes M."/>
            <person name="Khan S."/>
            <person name="Koesema E."/>
            <person name="Ishida J."/>
            <person name="Jiang P.X."/>
            <person name="Jones T."/>
            <person name="Kawai J."/>
            <person name="Kamiya A."/>
            <person name="Meyers C."/>
            <person name="Nakajima M."/>
            <person name="Narusaka M."/>
            <person name="Seki M."/>
            <person name="Sakurai T."/>
            <person name="Satou M."/>
            <person name="Tamse R."/>
            <person name="Vaysberg M."/>
            <person name="Wallender E.K."/>
            <person name="Wong C."/>
            <person name="Yamamura Y."/>
            <person name="Yuan S."/>
            <person name="Shinozaki K."/>
            <person name="Davis R.W."/>
            <person name="Theologis A."/>
            <person name="Ecker J.R."/>
        </authorList>
    </citation>
    <scope>NUCLEOTIDE SEQUENCE [LARGE SCALE MRNA]</scope>
    <source>
        <strain>cv. Columbia</strain>
    </source>
</reference>
<reference key="4">
    <citation type="journal article" date="2009" name="DNA Res.">
        <title>Analysis of multiple occurrences of alternative splicing events in Arabidopsis thaliana using novel sequenced full-length cDNAs.</title>
        <authorList>
            <person name="Iida K."/>
            <person name="Fukami-Kobayashi K."/>
            <person name="Toyoda A."/>
            <person name="Sakaki Y."/>
            <person name="Kobayashi M."/>
            <person name="Seki M."/>
            <person name="Shinozaki K."/>
        </authorList>
    </citation>
    <scope>NUCLEOTIDE SEQUENCE [LARGE SCALE MRNA]</scope>
    <source>
        <strain>cv. Columbia</strain>
    </source>
</reference>
<reference key="5">
    <citation type="journal article" date="2010" name="PLoS Genet.">
        <title>The de novo cytosine methyltransferase DRM2 requires intact UBA domains and a catalytically mutated paralog DRM3 during RNA-directed DNA methylation in Arabidopsis thaliana.</title>
        <authorList>
            <person name="Henderson I.R."/>
            <person name="Deleris A."/>
            <person name="Wong W."/>
            <person name="Zhong X."/>
            <person name="Chin H.G."/>
            <person name="Horwitz G.A."/>
            <person name="Kelly K.A."/>
            <person name="Pradhan S."/>
            <person name="Jacobsen S.E."/>
        </authorList>
    </citation>
    <scope>FUNCTION</scope>
</reference>
<reference key="6">
    <citation type="journal article" date="2014" name="BMC Res. Notes">
        <title>The cytological and molecular role of domains rearranged methyltransferase3 in RNA-dependent DNA methylation of Arabidopsis thaliana.</title>
        <authorList>
            <person name="Costa-Nunes P."/>
            <person name="Kim J.Y."/>
            <person name="Hong E."/>
            <person name="Pontes O."/>
        </authorList>
    </citation>
    <scope>FUNCTION</scope>
    <scope>SUBCELLULAR LOCATION</scope>
</reference>
<reference key="7">
    <citation type="journal article" date="2015" name="Proc. Natl. Acad. Sci. U.S.A.">
        <title>Domains rearranged methyltransferase3 controls DNA methylation and regulates RNA polymerase V transcript abundance in Arabidopsis.</title>
        <authorList>
            <person name="Zhong X."/>
            <person name="Hale C.J."/>
            <person name="Nguyen M."/>
            <person name="Ausin I."/>
            <person name="Groth M."/>
            <person name="Hetzel J."/>
            <person name="Vashisht A.A."/>
            <person name="Henderson I.R."/>
            <person name="Wohlschlegel J.A."/>
            <person name="Jacobsen S.E."/>
        </authorList>
    </citation>
    <scope>FUNCTION</scope>
    <scope>INTERACTION WITH POL V</scope>
</reference>
<dbReference type="EMBL" id="AB022216">
    <property type="protein sequence ID" value="BAB02735.1"/>
    <property type="status" value="ALT_SEQ"/>
    <property type="molecule type" value="Genomic_DNA"/>
</dbReference>
<dbReference type="EMBL" id="CP002686">
    <property type="protein sequence ID" value="AEE75935.1"/>
    <property type="molecule type" value="Genomic_DNA"/>
</dbReference>
<dbReference type="EMBL" id="CP002686">
    <property type="protein sequence ID" value="AEE75936.1"/>
    <property type="molecule type" value="Genomic_DNA"/>
</dbReference>
<dbReference type="EMBL" id="AY050882">
    <property type="protein sequence ID" value="AAK92819.1"/>
    <property type="molecule type" value="mRNA"/>
</dbReference>
<dbReference type="EMBL" id="AY150440">
    <property type="protein sequence ID" value="AAN12982.1"/>
    <property type="molecule type" value="mRNA"/>
</dbReference>
<dbReference type="EMBL" id="AK316724">
    <property type="protein sequence ID" value="BAH19451.1"/>
    <property type="molecule type" value="mRNA"/>
</dbReference>
<dbReference type="RefSeq" id="NP_566573.1">
    <property type="nucleotide sequence ID" value="NM_112609.3"/>
</dbReference>
<dbReference type="RefSeq" id="NP_850603.1">
    <property type="nucleotide sequence ID" value="NM_180272.2"/>
</dbReference>
<dbReference type="SMR" id="Q8H1E8"/>
<dbReference type="FunCoup" id="Q8H1E8">
    <property type="interactions" value="2324"/>
</dbReference>
<dbReference type="IntAct" id="Q8H1E8">
    <property type="interactions" value="1"/>
</dbReference>
<dbReference type="STRING" id="3702.Q8H1E8"/>
<dbReference type="REBASE" id="12266">
    <property type="entry name" value="M.AthDRM3"/>
</dbReference>
<dbReference type="REBASE" id="4601">
    <property type="entry name" value="M.AthDRM2"/>
</dbReference>
<dbReference type="PaxDb" id="3702-AT3G17310.1"/>
<dbReference type="ProteomicsDB" id="224354"/>
<dbReference type="EnsemblPlants" id="AT3G17310.1">
    <property type="protein sequence ID" value="AT3G17310.1"/>
    <property type="gene ID" value="AT3G17310"/>
</dbReference>
<dbReference type="EnsemblPlants" id="AT3G17310.2">
    <property type="protein sequence ID" value="AT3G17310.2"/>
    <property type="gene ID" value="AT3G17310"/>
</dbReference>
<dbReference type="GeneID" id="820994"/>
<dbReference type="Gramene" id="AT3G17310.1">
    <property type="protein sequence ID" value="AT3G17310.1"/>
    <property type="gene ID" value="AT3G17310"/>
</dbReference>
<dbReference type="Gramene" id="AT3G17310.2">
    <property type="protein sequence ID" value="AT3G17310.2"/>
    <property type="gene ID" value="AT3G17310"/>
</dbReference>
<dbReference type="KEGG" id="ath:AT3G17310"/>
<dbReference type="Araport" id="AT3G17310"/>
<dbReference type="TAIR" id="AT3G17310">
    <property type="gene designation" value="DRM3"/>
</dbReference>
<dbReference type="eggNOG" id="ENOG502QS8G">
    <property type="taxonomic scope" value="Eukaryota"/>
</dbReference>
<dbReference type="HOGENOM" id="CLU_006805_3_1_1"/>
<dbReference type="InParanoid" id="Q8H1E8"/>
<dbReference type="OMA" id="HDRNEHM"/>
<dbReference type="PhylomeDB" id="Q8H1E8"/>
<dbReference type="PRO" id="PR:Q8H1E8"/>
<dbReference type="Proteomes" id="UP000006548">
    <property type="component" value="Chromosome 3"/>
</dbReference>
<dbReference type="ExpressionAtlas" id="Q8H1E8">
    <property type="expression patterns" value="baseline and differential"/>
</dbReference>
<dbReference type="GO" id="GO:0005634">
    <property type="term" value="C:nucleus"/>
    <property type="evidence" value="ECO:0000314"/>
    <property type="project" value="UniProtKB"/>
</dbReference>
<dbReference type="GO" id="GO:0003677">
    <property type="term" value="F:DNA binding"/>
    <property type="evidence" value="ECO:0007669"/>
    <property type="project" value="UniProtKB-KW"/>
</dbReference>
<dbReference type="GO" id="GO:0008168">
    <property type="term" value="F:methyltransferase activity"/>
    <property type="evidence" value="ECO:0007669"/>
    <property type="project" value="UniProtKB-KW"/>
</dbReference>
<dbReference type="GO" id="GO:0032259">
    <property type="term" value="P:methylation"/>
    <property type="evidence" value="ECO:0007669"/>
    <property type="project" value="UniProtKB-KW"/>
</dbReference>
<dbReference type="Gene3D" id="3.40.50.150">
    <property type="entry name" value="Vaccinia Virus protein VP39"/>
    <property type="match status" value="1"/>
</dbReference>
<dbReference type="InterPro" id="IPR029063">
    <property type="entry name" value="SAM-dependent_MTases_sf"/>
</dbReference>
<dbReference type="InterPro" id="IPR030380">
    <property type="entry name" value="SAM_MeTfrase_DRM"/>
</dbReference>
<dbReference type="PANTHER" id="PTHR23068">
    <property type="entry name" value="DNA CYTOSINE-5- -METHYLTRANSFERASE 3-RELATED"/>
    <property type="match status" value="1"/>
</dbReference>
<dbReference type="PANTHER" id="PTHR23068:SF11">
    <property type="entry name" value="INACTIVE DNA (CYTOSINE-5)-METHYLTRANSFERASE DRM3-RELATED"/>
    <property type="match status" value="1"/>
</dbReference>
<dbReference type="SUPFAM" id="SSF53335">
    <property type="entry name" value="S-adenosyl-L-methionine-dependent methyltransferases"/>
    <property type="match status" value="2"/>
</dbReference>
<dbReference type="PROSITE" id="PS51680">
    <property type="entry name" value="SAM_MT_DRM"/>
    <property type="match status" value="1"/>
</dbReference>
<name>DRM3_ARATH</name>
<accession>Q8H1E8</accession>
<accession>Q949U6</accession>
<accession>Q9LUU0</accession>
<keyword id="KW-0238">DNA-binding</keyword>
<keyword id="KW-0489">Methyltransferase</keyword>
<keyword id="KW-0539">Nucleus</keyword>
<keyword id="KW-1185">Reference proteome</keyword>
<keyword id="KW-0677">Repeat</keyword>
<keyword id="KW-0949">S-adenosyl-L-methionine</keyword>
<keyword id="KW-0808">Transferase</keyword>
<organism>
    <name type="scientific">Arabidopsis thaliana</name>
    <name type="common">Mouse-ear cress</name>
    <dbReference type="NCBI Taxonomy" id="3702"/>
    <lineage>
        <taxon>Eukaryota</taxon>
        <taxon>Viridiplantae</taxon>
        <taxon>Streptophyta</taxon>
        <taxon>Embryophyta</taxon>
        <taxon>Tracheophyta</taxon>
        <taxon>Spermatophyta</taxon>
        <taxon>Magnoliopsida</taxon>
        <taxon>eudicotyledons</taxon>
        <taxon>Gunneridae</taxon>
        <taxon>Pentapetalae</taxon>
        <taxon>rosids</taxon>
        <taxon>malvids</taxon>
        <taxon>Brassicales</taxon>
        <taxon>Brassicaceae</taxon>
        <taxon>Camelineae</taxon>
        <taxon>Arabidopsis</taxon>
    </lineage>
</organism>
<protein>
    <recommendedName>
        <fullName evidence="8">Probable inactive DNA (cytosine-5)-methyltransferase DRM3</fullName>
    </recommendedName>
    <alternativeName>
        <fullName evidence="7">Protein DOMAINS REARRANGED METHYLTRANSFERASE 3</fullName>
    </alternativeName>
</protein>